<sequence length="628" mass="66452">MGCKMKQTAFEKSIDPASQKMLEKAENEGIETAWDRYEKQLPQCSFGQLGICCRNCNMGPCRIDPFGEGAEKGICGATADIIVARNLLRMIAAGAAAHSDHARDAVLTFKKMTEGEAGSYGIKDKTKLFSLASEYGISLEGKSHEEVAGELASALLAEFGKQEGPIQYTRRAPEARLRLWTSLGIEPRGVDREIVECMHRTHIGVDNDATHILLHGLRTSLSDGWGGSMIATEIQDVLFGTPEPKKSTVNLGVLSHDKVNVIIHGHEPILSEMIVQAAEDPELLELAKEKGAAGINVAGICCTGNETLMRHGTPIAGNFLQQELAVVTGAVEAMIVDVQCIMPALGNLTGCYHTKFISTSPKADFPGTVRMEFHEERAYDTAREIVRTAVENFPNRNIEKVNIPEEKQECMVGFSAEAILKALGGSPAPLIDAIAGGAVKGIGAVVGCNNVKVQHNYGHVNLVKELIKNNVLVVTTGCNAIACAEAGLLVPEAAAQAGDGLKGVCEALGIPPVLHMGSCVDISRILVLASAIAKSLGVDISDLPAAGAAPEWMSEKAVSIGAYVVSSGVFTVLGTVPPVLGSQAVTALLTKGLDNVIGASFAVEPDPFKAANLMLEHIEGKRKALGLN</sequence>
<gene>
    <name type="primary">cooS1</name>
    <name type="ordered locus">MM_0121</name>
</gene>
<name>COOS1_METMA</name>
<dbReference type="EC" id="1.2.7.4" evidence="1"/>
<dbReference type="EMBL" id="AE008384">
    <property type="protein sequence ID" value="AAM29817.1"/>
    <property type="molecule type" value="Genomic_DNA"/>
</dbReference>
<dbReference type="SMR" id="Q8Q0L5"/>
<dbReference type="KEGG" id="mma:MM_0121"/>
<dbReference type="PATRIC" id="fig|192952.21.peg.139"/>
<dbReference type="eggNOG" id="arCOG02429">
    <property type="taxonomic scope" value="Archaea"/>
</dbReference>
<dbReference type="HOGENOM" id="CLU_030631_0_0_2"/>
<dbReference type="Proteomes" id="UP000000595">
    <property type="component" value="Chromosome"/>
</dbReference>
<dbReference type="GO" id="GO:0051539">
    <property type="term" value="F:4 iron, 4 sulfur cluster binding"/>
    <property type="evidence" value="ECO:0007669"/>
    <property type="project" value="UniProtKB-KW"/>
</dbReference>
<dbReference type="GO" id="GO:0043885">
    <property type="term" value="F:anaerobic carbon-monoxide dehydrogenase activity"/>
    <property type="evidence" value="ECO:0007669"/>
    <property type="project" value="UniProtKB-EC"/>
</dbReference>
<dbReference type="GO" id="GO:0050418">
    <property type="term" value="F:hydroxylamine reductase activity"/>
    <property type="evidence" value="ECO:0007669"/>
    <property type="project" value="TreeGrafter"/>
</dbReference>
<dbReference type="GO" id="GO:0016151">
    <property type="term" value="F:nickel cation binding"/>
    <property type="evidence" value="ECO:0007669"/>
    <property type="project" value="InterPro"/>
</dbReference>
<dbReference type="GO" id="GO:0004601">
    <property type="term" value="F:peroxidase activity"/>
    <property type="evidence" value="ECO:0007669"/>
    <property type="project" value="TreeGrafter"/>
</dbReference>
<dbReference type="GO" id="GO:0006091">
    <property type="term" value="P:generation of precursor metabolites and energy"/>
    <property type="evidence" value="ECO:0007669"/>
    <property type="project" value="InterPro"/>
</dbReference>
<dbReference type="GO" id="GO:0042542">
    <property type="term" value="P:response to hydrogen peroxide"/>
    <property type="evidence" value="ECO:0007669"/>
    <property type="project" value="TreeGrafter"/>
</dbReference>
<dbReference type="CDD" id="cd01915">
    <property type="entry name" value="CODH"/>
    <property type="match status" value="1"/>
</dbReference>
<dbReference type="FunFam" id="3.40.50.2030:FF:000003">
    <property type="entry name" value="Carbon monoxide dehydrogenase"/>
    <property type="match status" value="1"/>
</dbReference>
<dbReference type="FunFam" id="3.40.50.2030:FF:000005">
    <property type="entry name" value="Carbon monoxide dehydrogenase"/>
    <property type="match status" value="1"/>
</dbReference>
<dbReference type="Gene3D" id="1.20.1270.30">
    <property type="match status" value="1"/>
</dbReference>
<dbReference type="Gene3D" id="3.40.50.2030">
    <property type="match status" value="2"/>
</dbReference>
<dbReference type="InterPro" id="IPR016101">
    <property type="entry name" value="CO_DH_a-bundle"/>
</dbReference>
<dbReference type="InterPro" id="IPR010047">
    <property type="entry name" value="CODH"/>
</dbReference>
<dbReference type="InterPro" id="IPR004137">
    <property type="entry name" value="HCP/CODH"/>
</dbReference>
<dbReference type="InterPro" id="IPR016099">
    <property type="entry name" value="Prismane-like_a/b-sand"/>
</dbReference>
<dbReference type="InterPro" id="IPR011254">
    <property type="entry name" value="Prismane-like_sf"/>
</dbReference>
<dbReference type="NCBIfam" id="TIGR01702">
    <property type="entry name" value="CO_DH_cata"/>
    <property type="match status" value="1"/>
</dbReference>
<dbReference type="PANTHER" id="PTHR30109:SF4">
    <property type="entry name" value="CARBON MONOXIDE DEHYDROGENASE"/>
    <property type="match status" value="1"/>
</dbReference>
<dbReference type="PANTHER" id="PTHR30109">
    <property type="entry name" value="HYDROXYLAMINE REDUCTASE"/>
    <property type="match status" value="1"/>
</dbReference>
<dbReference type="Pfam" id="PF03063">
    <property type="entry name" value="Prismane"/>
    <property type="match status" value="1"/>
</dbReference>
<dbReference type="PIRSF" id="PIRSF005023">
    <property type="entry name" value="CODH"/>
    <property type="match status" value="1"/>
</dbReference>
<dbReference type="SUPFAM" id="SSF56821">
    <property type="entry name" value="Prismane protein-like"/>
    <property type="match status" value="1"/>
</dbReference>
<organism>
    <name type="scientific">Methanosarcina mazei (strain ATCC BAA-159 / DSM 3647 / Goe1 / Go1 / JCM 11833 / OCM 88)</name>
    <name type="common">Methanosarcina frisia</name>
    <dbReference type="NCBI Taxonomy" id="192952"/>
    <lineage>
        <taxon>Archaea</taxon>
        <taxon>Methanobacteriati</taxon>
        <taxon>Methanobacteriota</taxon>
        <taxon>Stenosarchaea group</taxon>
        <taxon>Methanomicrobia</taxon>
        <taxon>Methanosarcinales</taxon>
        <taxon>Methanosarcinaceae</taxon>
        <taxon>Methanosarcina</taxon>
    </lineage>
</organism>
<comment type="function">
    <text evidence="1">CODH oxidizes carbon monoxide coupled, via CooF, to the reduction of a hydrogen cation by a hydrogenase (possibly CooH).</text>
</comment>
<comment type="catalytic activity">
    <reaction evidence="1">
        <text>CO + 2 oxidized [2Fe-2S]-[ferredoxin] + H2O = 2 reduced [2Fe-2S]-[ferredoxin] + CO2 + 2 H(+)</text>
        <dbReference type="Rhea" id="RHEA:21040"/>
        <dbReference type="Rhea" id="RHEA-COMP:10000"/>
        <dbReference type="Rhea" id="RHEA-COMP:10001"/>
        <dbReference type="ChEBI" id="CHEBI:15377"/>
        <dbReference type="ChEBI" id="CHEBI:15378"/>
        <dbReference type="ChEBI" id="CHEBI:16526"/>
        <dbReference type="ChEBI" id="CHEBI:17245"/>
        <dbReference type="ChEBI" id="CHEBI:33737"/>
        <dbReference type="ChEBI" id="CHEBI:33738"/>
        <dbReference type="EC" id="1.2.7.4"/>
    </reaction>
</comment>
<comment type="cofactor">
    <cofactor evidence="1">
        <name>[4Fe-4S] cluster</name>
        <dbReference type="ChEBI" id="CHEBI:49883"/>
    </cofactor>
    <text evidence="1">Binds 3 [4Fe-4S] clusters per homodimer.</text>
</comment>
<comment type="cofactor">
    <cofactor evidence="1">
        <name>[Ni-4Fe-5S] cluster</name>
        <dbReference type="ChEBI" id="CHEBI:177874"/>
    </cofactor>
    <text evidence="1">Binds 2 [Ni-4Fe-5S] clusters per homodimer.</text>
</comment>
<comment type="subunit">
    <text evidence="1">Homodimer.</text>
</comment>
<comment type="domain">
    <text evidence="1">Cluster B is an all-cysteinyl-liganded 4Fe-4S cluster; cluster C is a mixed Ni-Fe-S cluster which is the active site of CO oxidation. Cluster D is also an all-cysteinyl-liganded 4Fe-4S cluster that bridges the two subunits of the CODH dimer.</text>
</comment>
<comment type="similarity">
    <text evidence="2">Belongs to the Ni-containing carbon monoxide dehydrogenase family.</text>
</comment>
<proteinExistence type="inferred from homology"/>
<reference key="1">
    <citation type="journal article" date="2002" name="J. Mol. Microbiol. Biotechnol.">
        <title>The genome of Methanosarcina mazei: evidence for lateral gene transfer between Bacteria and Archaea.</title>
        <authorList>
            <person name="Deppenmeier U."/>
            <person name="Johann A."/>
            <person name="Hartsch T."/>
            <person name="Merkl R."/>
            <person name="Schmitz R.A."/>
            <person name="Martinez-Arias R."/>
            <person name="Henne A."/>
            <person name="Wiezer A."/>
            <person name="Baeumer S."/>
            <person name="Jacobi C."/>
            <person name="Brueggemann H."/>
            <person name="Lienard T."/>
            <person name="Christmann A."/>
            <person name="Boemecke M."/>
            <person name="Steckel S."/>
            <person name="Bhattacharyya A."/>
            <person name="Lykidis A."/>
            <person name="Overbeek R."/>
            <person name="Klenk H.-P."/>
            <person name="Gunsalus R.P."/>
            <person name="Fritz H.-J."/>
            <person name="Gottschalk G."/>
        </authorList>
    </citation>
    <scope>NUCLEOTIDE SEQUENCE [LARGE SCALE GENOMIC DNA]</scope>
    <source>
        <strain>ATCC BAA-159 / DSM 3647 / Goe1 / Go1 / JCM 11833 / OCM 88</strain>
    </source>
</reference>
<evidence type="ECO:0000250" key="1">
    <source>
        <dbReference type="UniProtKB" id="Q9F8A8"/>
    </source>
</evidence>
<evidence type="ECO:0000305" key="2"/>
<protein>
    <recommendedName>
        <fullName>Carbon monoxide dehydrogenase 1</fullName>
        <shortName>CODH 1</shortName>
        <ecNumber evidence="1">1.2.7.4</ecNumber>
    </recommendedName>
</protein>
<keyword id="KW-0004">4Fe-4S</keyword>
<keyword id="KW-0408">Iron</keyword>
<keyword id="KW-0411">Iron-sulfur</keyword>
<keyword id="KW-0479">Metal-binding</keyword>
<keyword id="KW-0533">Nickel</keyword>
<keyword id="KW-0560">Oxidoreductase</keyword>
<accession>Q8Q0L5</accession>
<feature type="chain" id="PRO_0000157145" description="Carbon monoxide dehydrogenase 1">
    <location>
        <begin position="1"/>
        <end position="628"/>
    </location>
</feature>
<feature type="binding site" evidence="1">
    <location>
        <position position="44"/>
    </location>
    <ligand>
        <name>[4Fe-4S] cluster</name>
        <dbReference type="ChEBI" id="CHEBI:49883"/>
        <label>1</label>
        <note>ligand shared between dimeric partners</note>
    </ligand>
</feature>
<feature type="binding site" evidence="1">
    <location>
        <position position="52"/>
    </location>
    <ligand>
        <name>[4Fe-4S] cluster</name>
        <dbReference type="ChEBI" id="CHEBI:49883"/>
        <label>1</label>
        <note>ligand shared between dimeric partners</note>
    </ligand>
</feature>
<feature type="binding site" evidence="1">
    <location>
        <position position="53"/>
    </location>
    <ligand>
        <name>[4Fe-4S] cluster</name>
        <dbReference type="ChEBI" id="CHEBI:49883"/>
        <label>2</label>
    </ligand>
</feature>
<feature type="binding site" evidence="1">
    <location>
        <position position="56"/>
    </location>
    <ligand>
        <name>[4Fe-4S] cluster</name>
        <dbReference type="ChEBI" id="CHEBI:49883"/>
        <label>2</label>
    </ligand>
</feature>
<feature type="binding site" evidence="1">
    <location>
        <position position="61"/>
    </location>
    <ligand>
        <name>[4Fe-4S] cluster</name>
        <dbReference type="ChEBI" id="CHEBI:49883"/>
        <label>2</label>
    </ligand>
</feature>
<feature type="binding site" evidence="1">
    <location>
        <position position="75"/>
    </location>
    <ligand>
        <name>[4Fe-4S] cluster</name>
        <dbReference type="ChEBI" id="CHEBI:49883"/>
        <label>2</label>
    </ligand>
</feature>
<feature type="binding site" evidence="1">
    <location>
        <position position="266"/>
    </location>
    <ligand>
        <name>[Ni-4Fe-5S] cluster</name>
        <dbReference type="ChEBI" id="CHEBI:177874"/>
    </ligand>
</feature>
<feature type="binding site" evidence="1">
    <location>
        <position position="302"/>
    </location>
    <ligand>
        <name>[Ni-4Fe-5S] cluster</name>
        <dbReference type="ChEBI" id="CHEBI:177874"/>
    </ligand>
</feature>
<feature type="binding site" evidence="1">
    <location>
        <position position="340"/>
    </location>
    <ligand>
        <name>[Ni-4Fe-5S] cluster</name>
        <dbReference type="ChEBI" id="CHEBI:177874"/>
    </ligand>
</feature>
<feature type="binding site" evidence="1">
    <location>
        <position position="448"/>
    </location>
    <ligand>
        <name>[Ni-4Fe-5S] cluster</name>
        <dbReference type="ChEBI" id="CHEBI:177874"/>
    </ligand>
</feature>
<feature type="binding site" evidence="1">
    <location>
        <position position="478"/>
    </location>
    <ligand>
        <name>[Ni-4Fe-5S] cluster</name>
        <dbReference type="ChEBI" id="CHEBI:177874"/>
    </ligand>
</feature>
<feature type="binding site" evidence="1">
    <location>
        <position position="519"/>
    </location>
    <ligand>
        <name>[Ni-4Fe-5S] cluster</name>
        <dbReference type="ChEBI" id="CHEBI:177874"/>
    </ligand>
</feature>